<gene>
    <name evidence="1" type="primary">rpmC</name>
    <name type="ordered locus">Ccur92_18420</name>
    <name type="ORF">CCV52592_1025</name>
</gene>
<sequence>MKYTEIKEKSVAELNALLKEKKVLLFTLKQKLKTMQLSNPNEIRALKKEIARINTAISASK</sequence>
<reference key="1">
    <citation type="submission" date="2007-07" db="EMBL/GenBank/DDBJ databases">
        <title>Genome sequence of Campylobacter curvus 525.92 isolated from human feces.</title>
        <authorList>
            <person name="Fouts D.E."/>
            <person name="Mongodin E.F."/>
            <person name="Puiu D."/>
            <person name="Sebastian Y."/>
            <person name="Miller W.G."/>
            <person name="Mandrell R.E."/>
            <person name="Lastovica A.J."/>
            <person name="Nelson K.E."/>
        </authorList>
    </citation>
    <scope>NUCLEOTIDE SEQUENCE [LARGE SCALE GENOMIC DNA]</scope>
    <source>
        <strain>525.92</strain>
    </source>
</reference>
<proteinExistence type="inferred from homology"/>
<protein>
    <recommendedName>
        <fullName evidence="1">Large ribosomal subunit protein uL29</fullName>
    </recommendedName>
    <alternativeName>
        <fullName evidence="2">50S ribosomal protein L29</fullName>
    </alternativeName>
</protein>
<keyword id="KW-1185">Reference proteome</keyword>
<keyword id="KW-0687">Ribonucleoprotein</keyword>
<keyword id="KW-0689">Ribosomal protein</keyword>
<dbReference type="EMBL" id="CP000767">
    <property type="protein sequence ID" value="EAT99618.1"/>
    <property type="molecule type" value="Genomic_DNA"/>
</dbReference>
<dbReference type="RefSeq" id="WP_011992850.1">
    <property type="nucleotide sequence ID" value="NC_009715.2"/>
</dbReference>
<dbReference type="SMR" id="A7H104"/>
<dbReference type="STRING" id="360105.CCV52592_1025"/>
<dbReference type="KEGG" id="ccv:CCV52592_1025"/>
<dbReference type="HOGENOM" id="CLU_158491_7_1_7"/>
<dbReference type="OrthoDB" id="5373225at2"/>
<dbReference type="Proteomes" id="UP000006380">
    <property type="component" value="Chromosome"/>
</dbReference>
<dbReference type="GO" id="GO:1990904">
    <property type="term" value="C:ribonucleoprotein complex"/>
    <property type="evidence" value="ECO:0007669"/>
    <property type="project" value="UniProtKB-KW"/>
</dbReference>
<dbReference type="GO" id="GO:0005840">
    <property type="term" value="C:ribosome"/>
    <property type="evidence" value="ECO:0007669"/>
    <property type="project" value="UniProtKB-KW"/>
</dbReference>
<dbReference type="GO" id="GO:0003735">
    <property type="term" value="F:structural constituent of ribosome"/>
    <property type="evidence" value="ECO:0007669"/>
    <property type="project" value="InterPro"/>
</dbReference>
<dbReference type="GO" id="GO:0006412">
    <property type="term" value="P:translation"/>
    <property type="evidence" value="ECO:0007669"/>
    <property type="project" value="UniProtKB-UniRule"/>
</dbReference>
<dbReference type="Gene3D" id="1.10.287.310">
    <property type="match status" value="1"/>
</dbReference>
<dbReference type="HAMAP" id="MF_00374">
    <property type="entry name" value="Ribosomal_uL29"/>
    <property type="match status" value="1"/>
</dbReference>
<dbReference type="InterPro" id="IPR001854">
    <property type="entry name" value="Ribosomal_uL29"/>
</dbReference>
<dbReference type="InterPro" id="IPR018254">
    <property type="entry name" value="Ribosomal_uL29_CS"/>
</dbReference>
<dbReference type="InterPro" id="IPR036049">
    <property type="entry name" value="Ribosomal_uL29_sf"/>
</dbReference>
<dbReference type="NCBIfam" id="TIGR00012">
    <property type="entry name" value="L29"/>
    <property type="match status" value="1"/>
</dbReference>
<dbReference type="Pfam" id="PF00831">
    <property type="entry name" value="Ribosomal_L29"/>
    <property type="match status" value="1"/>
</dbReference>
<dbReference type="SUPFAM" id="SSF46561">
    <property type="entry name" value="Ribosomal protein L29 (L29p)"/>
    <property type="match status" value="1"/>
</dbReference>
<dbReference type="PROSITE" id="PS00579">
    <property type="entry name" value="RIBOSOMAL_L29"/>
    <property type="match status" value="1"/>
</dbReference>
<organism>
    <name type="scientific">Campylobacter curvus (strain 525.92)</name>
    <dbReference type="NCBI Taxonomy" id="360105"/>
    <lineage>
        <taxon>Bacteria</taxon>
        <taxon>Pseudomonadati</taxon>
        <taxon>Campylobacterota</taxon>
        <taxon>Epsilonproteobacteria</taxon>
        <taxon>Campylobacterales</taxon>
        <taxon>Campylobacteraceae</taxon>
        <taxon>Campylobacter</taxon>
    </lineage>
</organism>
<comment type="similarity">
    <text evidence="1">Belongs to the universal ribosomal protein uL29 family.</text>
</comment>
<evidence type="ECO:0000255" key="1">
    <source>
        <dbReference type="HAMAP-Rule" id="MF_00374"/>
    </source>
</evidence>
<evidence type="ECO:0000305" key="2"/>
<name>RL29_CAMC5</name>
<accession>A7H104</accession>
<feature type="chain" id="PRO_1000007449" description="Large ribosomal subunit protein uL29">
    <location>
        <begin position="1"/>
        <end position="61"/>
    </location>
</feature>